<gene>
    <name type="primary">CGN1</name>
</gene>
<accession>P23805</accession>
<accession>O97748</accession>
<accession>Q58CU7</accession>
<accession>Q9TRF6</accession>
<name>CONG_BOVIN</name>
<proteinExistence type="evidence at protein level"/>
<comment type="function">
    <text>Calcium-dependent lectin-like protein which binds to a yeast cell wall extract and immune complexes through the complement component (C3bi). It is capable of binding non-reducing terminal N-acetylglucosamine, mannose, and fucose residues.</text>
</comment>
<comment type="subunit">
    <text>Oligomeric complex of 4 set of homotrimers.</text>
</comment>
<comment type="PTM">
    <text>The hydroxylysines may be O-glycosylated.</text>
</comment>
<comment type="similarity">
    <text evidence="6">Belongs to the SFTPD family.</text>
</comment>
<feature type="signal peptide" evidence="4 5">
    <location>
        <begin position="1"/>
        <end position="20"/>
    </location>
</feature>
<feature type="chain" id="PRO_0000017370" description="Conglutinin">
    <location>
        <begin position="21"/>
        <end position="371"/>
    </location>
</feature>
<feature type="domain" description="Collagen-like">
    <location>
        <begin position="46"/>
        <end position="216"/>
    </location>
</feature>
<feature type="domain" description="C-type lectin" evidence="2">
    <location>
        <begin position="273"/>
        <end position="371"/>
    </location>
</feature>
<feature type="region of interest" description="Disordered" evidence="3">
    <location>
        <begin position="47"/>
        <end position="215"/>
    </location>
</feature>
<feature type="short sequence motif" description="Cell attachment site" evidence="1">
    <location>
        <begin position="201"/>
        <end position="203"/>
    </location>
</feature>
<feature type="compositionally biased region" description="Basic and acidic residues" evidence="3">
    <location>
        <begin position="51"/>
        <end position="65"/>
    </location>
</feature>
<feature type="compositionally biased region" description="Low complexity" evidence="3">
    <location>
        <begin position="71"/>
        <end position="83"/>
    </location>
</feature>
<feature type="compositionally biased region" description="Gly residues" evidence="3">
    <location>
        <begin position="139"/>
        <end position="148"/>
    </location>
</feature>
<feature type="modified residue" description="5-hydroxylysine" evidence="4">
    <location>
        <position position="63"/>
    </location>
</feature>
<feature type="modified residue" description="4-hydroxyproline" evidence="4">
    <location>
        <position position="78"/>
    </location>
</feature>
<feature type="modified residue" description="5-hydroxylysine" evidence="4">
    <location>
        <position position="87"/>
    </location>
</feature>
<feature type="modified residue" description="4-hydroxyproline" evidence="4">
    <location>
        <position position="96"/>
    </location>
</feature>
<feature type="modified residue" description="5-hydroxylysine" evidence="4">
    <location>
        <position position="99"/>
    </location>
</feature>
<feature type="modified residue" description="4-hydroxyproline" evidence="4">
    <location>
        <position position="108"/>
    </location>
</feature>
<feature type="modified residue" description="4-hydroxyproline" evidence="4">
    <location>
        <position position="111"/>
    </location>
</feature>
<feature type="modified residue" description="4-hydroxyproline" evidence="4">
    <location>
        <position position="129"/>
    </location>
</feature>
<feature type="modified residue" description="4-hydroxyproline" evidence="4">
    <location>
        <position position="132"/>
    </location>
</feature>
<feature type="modified residue" description="5-hydroxylysine" evidence="4">
    <location>
        <position position="135"/>
    </location>
</feature>
<feature type="modified residue" description="5-hydroxylysine" evidence="4">
    <location>
        <position position="141"/>
    </location>
</feature>
<feature type="modified residue" description="4-hydroxyproline" evidence="4">
    <location>
        <position position="147"/>
    </location>
</feature>
<feature type="modified residue" description="4-hydroxyproline" evidence="4">
    <location>
        <position position="153"/>
    </location>
</feature>
<feature type="modified residue" description="5-hydroxylysine" evidence="4">
    <location>
        <position position="159"/>
    </location>
</feature>
<feature type="modified residue" description="5-hydroxylysine" evidence="4">
    <location>
        <position position="162"/>
    </location>
</feature>
<feature type="modified residue" description="4-hydroxyproline" evidence="4">
    <location>
        <position position="171"/>
    </location>
</feature>
<feature type="modified residue" description="4-hydroxyproline" evidence="4">
    <location>
        <position position="195"/>
    </location>
</feature>
<feature type="modified residue" description="5-hydroxylysine" evidence="4">
    <location>
        <position position="198"/>
    </location>
</feature>
<feature type="glycosylation site" description="N-linked (GlcNAc...) asparagine">
    <location>
        <position position="337"/>
    </location>
</feature>
<feature type="disulfide bond" evidence="2">
    <location>
        <begin position="275"/>
        <end position="369"/>
    </location>
</feature>
<feature type="disulfide bond" evidence="2">
    <location>
        <begin position="347"/>
        <end position="361"/>
    </location>
</feature>
<feature type="sequence conflict" description="In Ref. 2 and 3." evidence="6" ref="2 3">
    <original>R</original>
    <variation>H</variation>
    <location>
        <position position="173"/>
    </location>
</feature>
<feature type="sequence conflict" description="In Ref. 7; AA sequence." evidence="6" ref="7">
    <original>K</original>
    <variation>S</variation>
    <location>
        <position position="210"/>
    </location>
</feature>
<feature type="sequence conflict" description="In Ref. 2; CAA50665." evidence="6" ref="2">
    <original>V</original>
    <variation>A</variation>
    <location>
        <position position="218"/>
    </location>
</feature>
<feature type="sequence conflict" description="In Ref. 2; CAA50665." evidence="6" ref="2">
    <original>E</original>
    <variation>V</variation>
    <location>
        <position position="272"/>
    </location>
</feature>
<feature type="strand" evidence="7">
    <location>
        <begin position="252"/>
        <end position="254"/>
    </location>
</feature>
<feature type="strand" evidence="7">
    <location>
        <begin position="257"/>
        <end position="266"/>
    </location>
</feature>
<feature type="helix" evidence="7">
    <location>
        <begin position="268"/>
        <end position="277"/>
    </location>
</feature>
<feature type="strand" evidence="8">
    <location>
        <begin position="280"/>
        <end position="282"/>
    </location>
</feature>
<feature type="helix" evidence="7">
    <location>
        <begin position="288"/>
        <end position="301"/>
    </location>
</feature>
<feature type="strand" evidence="7">
    <location>
        <begin position="312"/>
        <end position="314"/>
    </location>
</feature>
<feature type="strand" evidence="7">
    <location>
        <begin position="347"/>
        <end position="350"/>
    </location>
</feature>
<feature type="strand" evidence="7">
    <location>
        <begin position="356"/>
        <end position="359"/>
    </location>
</feature>
<feature type="strand" evidence="7">
    <location>
        <begin position="365"/>
        <end position="371"/>
    </location>
</feature>
<dbReference type="EMBL" id="D14085">
    <property type="protein sequence ID" value="BAA03170.1"/>
    <property type="molecule type" value="mRNA"/>
</dbReference>
<dbReference type="EMBL" id="X71774">
    <property type="protein sequence ID" value="CAA50665.1"/>
    <property type="molecule type" value="mRNA"/>
</dbReference>
<dbReference type="EMBL" id="L18871">
    <property type="protein sequence ID" value="AAA20126.1"/>
    <property type="molecule type" value="mRNA"/>
</dbReference>
<dbReference type="EMBL" id="U06860">
    <property type="protein sequence ID" value="AAB60624.1"/>
    <property type="molecule type" value="Genomic_DNA"/>
</dbReference>
<dbReference type="EMBL" id="U06854">
    <property type="protein sequence ID" value="AAB60624.1"/>
    <property type="status" value="JOINED"/>
    <property type="molecule type" value="Genomic_DNA"/>
</dbReference>
<dbReference type="EMBL" id="U06855">
    <property type="protein sequence ID" value="AAB60624.1"/>
    <property type="status" value="JOINED"/>
    <property type="molecule type" value="Genomic_DNA"/>
</dbReference>
<dbReference type="EMBL" id="U06856">
    <property type="protein sequence ID" value="AAB60624.1"/>
    <property type="status" value="JOINED"/>
    <property type="molecule type" value="Genomic_DNA"/>
</dbReference>
<dbReference type="EMBL" id="U06857">
    <property type="protein sequence ID" value="AAB60624.1"/>
    <property type="status" value="JOINED"/>
    <property type="molecule type" value="Genomic_DNA"/>
</dbReference>
<dbReference type="EMBL" id="U06858">
    <property type="protein sequence ID" value="AAB60624.1"/>
    <property type="status" value="JOINED"/>
    <property type="molecule type" value="Genomic_DNA"/>
</dbReference>
<dbReference type="EMBL" id="U06859">
    <property type="protein sequence ID" value="AAB60624.1"/>
    <property type="status" value="JOINED"/>
    <property type="molecule type" value="Genomic_DNA"/>
</dbReference>
<dbReference type="EMBL" id="D25302">
    <property type="protein sequence ID" value="BAA04983.2"/>
    <property type="molecule type" value="Genomic_DNA"/>
</dbReference>
<dbReference type="EMBL" id="BT021850">
    <property type="protein sequence ID" value="AAX46697.1"/>
    <property type="molecule type" value="mRNA"/>
</dbReference>
<dbReference type="PIR" id="I45878">
    <property type="entry name" value="I45878"/>
</dbReference>
<dbReference type="PIR" id="JN0450">
    <property type="entry name" value="JN0450"/>
</dbReference>
<dbReference type="RefSeq" id="NP_783630.2">
    <property type="nucleotide sequence ID" value="NM_175699.2"/>
</dbReference>
<dbReference type="PDB" id="6RYG">
    <property type="method" value="X-ray"/>
    <property type="resolution" value="0.97 A"/>
    <property type="chains" value="A=244-371"/>
</dbReference>
<dbReference type="PDB" id="6RYJ">
    <property type="method" value="X-ray"/>
    <property type="resolution" value="1.25 A"/>
    <property type="chains" value="A=244-371"/>
</dbReference>
<dbReference type="PDB" id="6RYM">
    <property type="method" value="X-ray"/>
    <property type="resolution" value="1.46 A"/>
    <property type="chains" value="A=244-371"/>
</dbReference>
<dbReference type="PDB" id="6RYN">
    <property type="method" value="X-ray"/>
    <property type="resolution" value="1.00 A"/>
    <property type="chains" value="A=244-371"/>
</dbReference>
<dbReference type="PDBsum" id="6RYG"/>
<dbReference type="PDBsum" id="6RYJ"/>
<dbReference type="PDBsum" id="6RYM"/>
<dbReference type="PDBsum" id="6RYN"/>
<dbReference type="SMR" id="P23805"/>
<dbReference type="FunCoup" id="P23805">
    <property type="interactions" value="132"/>
</dbReference>
<dbReference type="STRING" id="9913.ENSBTAP00000003773"/>
<dbReference type="UniLectin" id="P23805"/>
<dbReference type="GlyCosmos" id="P23805">
    <property type="glycosylation" value="1 site, No reported glycans"/>
</dbReference>
<dbReference type="GlyGen" id="P23805">
    <property type="glycosylation" value="1 site"/>
</dbReference>
<dbReference type="PaxDb" id="9913-ENSBTAP00000018649"/>
<dbReference type="GeneID" id="281068"/>
<dbReference type="KEGG" id="bta:281068"/>
<dbReference type="CTD" id="281068"/>
<dbReference type="VEuPathDB" id="HostDB:ENSBTAG00000047317"/>
<dbReference type="eggNOG" id="KOG4297">
    <property type="taxonomic scope" value="Eukaryota"/>
</dbReference>
<dbReference type="HOGENOM" id="CLU_049894_3_0_1"/>
<dbReference type="InParanoid" id="P23805"/>
<dbReference type="OMA" id="QGSKGYM"/>
<dbReference type="OrthoDB" id="10255512at2759"/>
<dbReference type="TreeFam" id="TF330481"/>
<dbReference type="Proteomes" id="UP000009136">
    <property type="component" value="Chromosome 28"/>
</dbReference>
<dbReference type="Bgee" id="ENSBTAG00000047317">
    <property type="expression patterns" value="Expressed in liver and 27 other cell types or tissues"/>
</dbReference>
<dbReference type="GO" id="GO:0005581">
    <property type="term" value="C:collagen trimer"/>
    <property type="evidence" value="ECO:0007669"/>
    <property type="project" value="UniProtKB-KW"/>
</dbReference>
<dbReference type="GO" id="GO:0005537">
    <property type="term" value="F:D-mannose binding"/>
    <property type="evidence" value="ECO:0007669"/>
    <property type="project" value="UniProtKB-KW"/>
</dbReference>
<dbReference type="FunFam" id="1.20.5.360:FF:000001">
    <property type="entry name" value="Pulmonary surfactant-associated protein D"/>
    <property type="match status" value="1"/>
</dbReference>
<dbReference type="FunFam" id="3.10.100.10:FF:000045">
    <property type="entry name" value="Pulmonary surfactant-associated protein D"/>
    <property type="match status" value="1"/>
</dbReference>
<dbReference type="Gene3D" id="3.10.100.10">
    <property type="entry name" value="Mannose-Binding Protein A, subunit A"/>
    <property type="match status" value="1"/>
</dbReference>
<dbReference type="Gene3D" id="1.20.5.360">
    <property type="entry name" value="SFTPD helical domain"/>
    <property type="match status" value="1"/>
</dbReference>
<dbReference type="InterPro" id="IPR001304">
    <property type="entry name" value="C-type_lectin-like"/>
</dbReference>
<dbReference type="InterPro" id="IPR016186">
    <property type="entry name" value="C-type_lectin-like/link_sf"/>
</dbReference>
<dbReference type="InterPro" id="IPR018378">
    <property type="entry name" value="C-type_lectin_CS"/>
</dbReference>
<dbReference type="InterPro" id="IPR051077">
    <property type="entry name" value="Ca-dependent_lectin"/>
</dbReference>
<dbReference type="InterPro" id="IPR008160">
    <property type="entry name" value="Collagen"/>
</dbReference>
<dbReference type="InterPro" id="IPR016187">
    <property type="entry name" value="CTDL_fold"/>
</dbReference>
<dbReference type="InterPro" id="IPR015097">
    <property type="entry name" value="Surfac_D-trimer"/>
</dbReference>
<dbReference type="PANTHER" id="PTHR24024">
    <property type="entry name" value="PULMONARY SURFACTANT-ASSOCIATED PROTEIN A"/>
    <property type="match status" value="1"/>
</dbReference>
<dbReference type="PANTHER" id="PTHR24024:SF15">
    <property type="entry name" value="PULMONARY SURFACTANT-ASSOCIATED PROTEIN D"/>
    <property type="match status" value="1"/>
</dbReference>
<dbReference type="Pfam" id="PF01391">
    <property type="entry name" value="Collagen"/>
    <property type="match status" value="1"/>
</dbReference>
<dbReference type="Pfam" id="PF00059">
    <property type="entry name" value="Lectin_C"/>
    <property type="match status" value="1"/>
</dbReference>
<dbReference type="Pfam" id="PF09006">
    <property type="entry name" value="Surfac_D-trimer"/>
    <property type="match status" value="1"/>
</dbReference>
<dbReference type="SMART" id="SM00034">
    <property type="entry name" value="CLECT"/>
    <property type="match status" value="1"/>
</dbReference>
<dbReference type="SUPFAM" id="SSF56436">
    <property type="entry name" value="C-type lectin-like"/>
    <property type="match status" value="1"/>
</dbReference>
<dbReference type="SUPFAM" id="SSF57944">
    <property type="entry name" value="Triple coiled coil domain of C-type lectins"/>
    <property type="match status" value="1"/>
</dbReference>
<dbReference type="PROSITE" id="PS00615">
    <property type="entry name" value="C_TYPE_LECTIN_1"/>
    <property type="match status" value="1"/>
</dbReference>
<dbReference type="PROSITE" id="PS50041">
    <property type="entry name" value="C_TYPE_LECTIN_2"/>
    <property type="match status" value="1"/>
</dbReference>
<evidence type="ECO:0000255" key="1"/>
<evidence type="ECO:0000255" key="2">
    <source>
        <dbReference type="PROSITE-ProRule" id="PRU00040"/>
    </source>
</evidence>
<evidence type="ECO:0000256" key="3">
    <source>
        <dbReference type="SAM" id="MobiDB-lite"/>
    </source>
</evidence>
<evidence type="ECO:0000269" key="4">
    <source>
    </source>
</evidence>
<evidence type="ECO:0000269" key="5">
    <source>
    </source>
</evidence>
<evidence type="ECO:0000305" key="6"/>
<evidence type="ECO:0007829" key="7">
    <source>
        <dbReference type="PDB" id="6RYG"/>
    </source>
</evidence>
<evidence type="ECO:0007829" key="8">
    <source>
        <dbReference type="PDB" id="6RYN"/>
    </source>
</evidence>
<organism>
    <name type="scientific">Bos taurus</name>
    <name type="common">Bovine</name>
    <dbReference type="NCBI Taxonomy" id="9913"/>
    <lineage>
        <taxon>Eukaryota</taxon>
        <taxon>Metazoa</taxon>
        <taxon>Chordata</taxon>
        <taxon>Craniata</taxon>
        <taxon>Vertebrata</taxon>
        <taxon>Euteleostomi</taxon>
        <taxon>Mammalia</taxon>
        <taxon>Eutheria</taxon>
        <taxon>Laurasiatheria</taxon>
        <taxon>Artiodactyla</taxon>
        <taxon>Ruminantia</taxon>
        <taxon>Pecora</taxon>
        <taxon>Bovidae</taxon>
        <taxon>Bovinae</taxon>
        <taxon>Bos</taxon>
    </lineage>
</organism>
<reference key="1">
    <citation type="journal article" date="1993" name="Biochem. Biophys. Res. Commun.">
        <title>Cloning and sequencing of a cDNA coding for bovine conglutinin.</title>
        <authorList>
            <person name="Suzuki Y."/>
            <person name="Yin Y."/>
            <person name="Makino M."/>
            <person name="Kurimura T."/>
            <person name="Wakamiya N."/>
        </authorList>
    </citation>
    <scope>NUCLEOTIDE SEQUENCE [MRNA]</scope>
</reference>
<reference key="2">
    <citation type="journal article" date="1993" name="Biochem. J.">
        <title>The cDNA cloning of conglutinin and identification of liver as a primary site of synthesis of conglutinin in members of the Bovidae.</title>
        <authorList>
            <person name="Lu J."/>
            <person name="Laursen S.B."/>
            <person name="Thiel S."/>
            <person name="Jensenius J.C."/>
            <person name="Reid B.M."/>
        </authorList>
    </citation>
    <scope>NUCLEOTIDE SEQUENCE [MRNA]</scope>
</reference>
<reference key="3">
    <citation type="journal article" date="1994" name="Gene">
        <title>Bovine conglutinin (BC) mRNA expressed in liver: cloning and characterization of the BC cDNA reveals strong homology to surfactant protein-D.</title>
        <authorList>
            <person name="Liou L.S."/>
            <person name="Sastry R."/>
            <person name="Hartshorn K.L."/>
            <person name="Lee Y.M."/>
            <person name="Okarma T.B."/>
            <person name="Tauber A.I."/>
            <person name="Sastry K.N."/>
        </authorList>
    </citation>
    <scope>NUCLEOTIDE SEQUENCE [MRNA]</scope>
    <source>
        <tissue>Liver</tissue>
    </source>
</reference>
<reference key="4">
    <citation type="journal article" date="1994" name="J. Immunol.">
        <title>Bovine conglutinin gene exon structure reveals its evolutionary relationship to surfactant protein-D.</title>
        <authorList>
            <person name="Liou L.S."/>
            <person name="Sastry R."/>
            <person name="Hartshorn K.L."/>
            <person name="Lee Y.M."/>
            <person name="Okarma T.B."/>
            <person name="Tauber A.I."/>
            <person name="Sastry K.N."/>
        </authorList>
    </citation>
    <scope>NUCLEOTIDE SEQUENCE [GENOMIC DNA]</scope>
    <source>
        <tissue>Semen</tissue>
    </source>
</reference>
<reference key="5">
    <citation type="journal article" date="1994" name="Biochem. Biophys. Res. Commun.">
        <title>Gene organization and 5'-flanking region sequence of conglutinin: a C-type mammalian lectin containing a collagen-like domain.</title>
        <authorList>
            <person name="Kawasaki N."/>
            <person name="Itoh N."/>
            <person name="Kawasaki T."/>
        </authorList>
    </citation>
    <scope>NUCLEOTIDE SEQUENCE [GENOMIC DNA]</scope>
    <source>
        <tissue>Liver</tissue>
    </source>
</reference>
<reference key="6">
    <citation type="journal article" date="2005" name="BMC Genomics">
        <title>Characterization of 954 bovine full-CDS cDNA sequences.</title>
        <authorList>
            <person name="Harhay G.P."/>
            <person name="Sonstegard T.S."/>
            <person name="Keele J.W."/>
            <person name="Heaton M.P."/>
            <person name="Clawson M.L."/>
            <person name="Snelling W.M."/>
            <person name="Wiedmann R.T."/>
            <person name="Van Tassell C.P."/>
            <person name="Smith T.P.L."/>
        </authorList>
    </citation>
    <scope>NUCLEOTIDE SEQUENCE [LARGE SCALE MRNA]</scope>
</reference>
<reference key="7">
    <citation type="journal article" date="1991" name="J. Biol. Chem.">
        <title>Primary structure of bovine conglutinin, a member of the C-type animal lectin family.</title>
        <authorList>
            <person name="Lee Y.-M."/>
            <person name="Leiby K.R."/>
            <person name="Allar J."/>
            <person name="Paris K."/>
            <person name="Lerch B."/>
            <person name="Okarma T.B."/>
        </authorList>
    </citation>
    <scope>PROTEIN SEQUENCE OF 21-371</scope>
    <scope>HYDROXYLATION AT LYS-63; PRO-78; LYS-87; PRO-96; LYS-99; PRO-108; PRO-111; PRO-129; PRO-132; LYS-135; LYS-141; PRO-147; PRO-153; LYS-159; LYS-162; PRO-171; PRO-195 AND LYS-198</scope>
</reference>
<reference key="8">
    <citation type="journal article" date="1987" name="Biochem. Biophys. Res. Commun.">
        <title>The carbohydrate specificity of conglutinin and its homology to proteins in the hepatic lectin family.</title>
        <authorList>
            <person name="Young N.M."/>
            <person name="Leon M.A."/>
        </authorList>
    </citation>
    <scope>PRELIMINARY PROTEIN SEQUENCE OF 21-52</scope>
</reference>
<reference key="9">
    <citation type="journal article" date="1993" name="Biochem. J.">
        <title>Localization of the receptor-binding site in the collectin family of proteins.</title>
        <authorList>
            <person name="Malhotra R."/>
            <person name="Laursen S.B."/>
            <person name="Willis A.C."/>
            <person name="Sim R.B."/>
        </authorList>
    </citation>
    <scope>PROTEIN SEQUENCE OF 21-80</scope>
</reference>
<sequence>MLLLPLSVLLLLTQPWRSLGAEMTTFSQKILANACTLVMCSPLESGLPGHDGQDGRECPHGEKGDPGSPGPAGRAGRPGWVGPIGPKGDNGFVGEPGPKGDTGPRGPPGMPGPAGREGPSGKQGSMGPPGTPGPKGETGPKGGVGAPGIQGFPGPSGLKGEKGAPGETGAPGRAGVTGPSGAIGPQGPSGARGPPGLKGDRGDPGETGAKGESGLAEVNALKQRVTILDGHLRRFQNAFSQYKKAVLFPDGQAVGEKIFKTAGAVKSYSDAEQLCREAKGQLASPRSSAENEAVTQMVRAQEKNAYLSMNDISTEGRFTYPTGEILVYSNWADGEPNNSDEGQPENCVEIFPDGKWNDVPCSKQLLVICEF</sequence>
<keyword id="KW-0002">3D-structure</keyword>
<keyword id="KW-0106">Calcium</keyword>
<keyword id="KW-0176">Collagen</keyword>
<keyword id="KW-0903">Direct protein sequencing</keyword>
<keyword id="KW-1015">Disulfide bond</keyword>
<keyword id="KW-0325">Glycoprotein</keyword>
<keyword id="KW-0379">Hydroxylation</keyword>
<keyword id="KW-0430">Lectin</keyword>
<keyword id="KW-0465">Mannose-binding</keyword>
<keyword id="KW-1185">Reference proteome</keyword>
<keyword id="KW-0677">Repeat</keyword>
<keyword id="KW-0732">Signal</keyword>
<protein>
    <recommendedName>
        <fullName>Conglutinin</fullName>
    </recommendedName>
</protein>